<dbReference type="EMBL" id="U79735">
    <property type="protein sequence ID" value="AAD00326.1"/>
    <property type="molecule type" value="Genomic_DNA"/>
</dbReference>
<dbReference type="EMBL" id="AE008922">
    <property type="protein sequence ID" value="AAM40230.1"/>
    <property type="molecule type" value="Genomic_DNA"/>
</dbReference>
<dbReference type="RefSeq" id="NP_636306.1">
    <property type="nucleotide sequence ID" value="NC_003902.1"/>
</dbReference>
<dbReference type="RefSeq" id="WP_011036134.1">
    <property type="nucleotide sequence ID" value="NC_003902.1"/>
</dbReference>
<dbReference type="SMR" id="Q9Z3E6"/>
<dbReference type="STRING" id="190485.XCC0920"/>
<dbReference type="EnsemblBacteria" id="AAM40230">
    <property type="protein sequence ID" value="AAM40230"/>
    <property type="gene ID" value="XCC0920"/>
</dbReference>
<dbReference type="GeneID" id="58014504"/>
<dbReference type="KEGG" id="xcc:XCC0920"/>
<dbReference type="PATRIC" id="fig|190485.4.peg.992"/>
<dbReference type="eggNOG" id="COG0203">
    <property type="taxonomic scope" value="Bacteria"/>
</dbReference>
<dbReference type="HOGENOM" id="CLU_074407_2_0_6"/>
<dbReference type="OrthoDB" id="9809073at2"/>
<dbReference type="Proteomes" id="UP000001010">
    <property type="component" value="Chromosome"/>
</dbReference>
<dbReference type="GO" id="GO:0022625">
    <property type="term" value="C:cytosolic large ribosomal subunit"/>
    <property type="evidence" value="ECO:0000318"/>
    <property type="project" value="GO_Central"/>
</dbReference>
<dbReference type="GO" id="GO:0003735">
    <property type="term" value="F:structural constituent of ribosome"/>
    <property type="evidence" value="ECO:0000318"/>
    <property type="project" value="GO_Central"/>
</dbReference>
<dbReference type="GO" id="GO:0006412">
    <property type="term" value="P:translation"/>
    <property type="evidence" value="ECO:0007669"/>
    <property type="project" value="UniProtKB-UniRule"/>
</dbReference>
<dbReference type="FunFam" id="3.90.1030.10:FF:000001">
    <property type="entry name" value="50S ribosomal protein L17"/>
    <property type="match status" value="1"/>
</dbReference>
<dbReference type="Gene3D" id="3.90.1030.10">
    <property type="entry name" value="Ribosomal protein L17"/>
    <property type="match status" value="1"/>
</dbReference>
<dbReference type="HAMAP" id="MF_01368">
    <property type="entry name" value="Ribosomal_bL17"/>
    <property type="match status" value="1"/>
</dbReference>
<dbReference type="InterPro" id="IPR000456">
    <property type="entry name" value="Ribosomal_bL17"/>
</dbReference>
<dbReference type="InterPro" id="IPR047859">
    <property type="entry name" value="Ribosomal_bL17_CS"/>
</dbReference>
<dbReference type="InterPro" id="IPR036373">
    <property type="entry name" value="Ribosomal_bL17_sf"/>
</dbReference>
<dbReference type="NCBIfam" id="TIGR00059">
    <property type="entry name" value="L17"/>
    <property type="match status" value="1"/>
</dbReference>
<dbReference type="PANTHER" id="PTHR14413:SF16">
    <property type="entry name" value="LARGE RIBOSOMAL SUBUNIT PROTEIN BL17M"/>
    <property type="match status" value="1"/>
</dbReference>
<dbReference type="PANTHER" id="PTHR14413">
    <property type="entry name" value="RIBOSOMAL PROTEIN L17"/>
    <property type="match status" value="1"/>
</dbReference>
<dbReference type="Pfam" id="PF01196">
    <property type="entry name" value="Ribosomal_L17"/>
    <property type="match status" value="1"/>
</dbReference>
<dbReference type="SUPFAM" id="SSF64263">
    <property type="entry name" value="Prokaryotic ribosomal protein L17"/>
    <property type="match status" value="1"/>
</dbReference>
<dbReference type="PROSITE" id="PS01167">
    <property type="entry name" value="RIBOSOMAL_L17"/>
    <property type="match status" value="1"/>
</dbReference>
<accession>Q9Z3E6</accession>
<reference key="1">
    <citation type="journal article" date="2000" name="Biochim. Biophys. Acta">
        <title>Sequence and molecular analysis of the rpoA cluster genes from Xanthomonas campestris pv. campestris.</title>
        <authorList>
            <person name="Lai J.-Y."/>
            <person name="Huang C.-F."/>
            <person name="Tseng Y.-H."/>
            <person name="Yang M.-T."/>
        </authorList>
    </citation>
    <scope>NUCLEOTIDE SEQUENCE [GENOMIC DNA]</scope>
    <source>
        <strain>Xc11</strain>
    </source>
</reference>
<reference key="2">
    <citation type="journal article" date="2002" name="Nature">
        <title>Comparison of the genomes of two Xanthomonas pathogens with differing host specificities.</title>
        <authorList>
            <person name="da Silva A.C.R."/>
            <person name="Ferro J.A."/>
            <person name="Reinach F.C."/>
            <person name="Farah C.S."/>
            <person name="Furlan L.R."/>
            <person name="Quaggio R.B."/>
            <person name="Monteiro-Vitorello C.B."/>
            <person name="Van Sluys M.A."/>
            <person name="Almeida N.F. Jr."/>
            <person name="Alves L.M.C."/>
            <person name="do Amaral A.M."/>
            <person name="Bertolini M.C."/>
            <person name="Camargo L.E.A."/>
            <person name="Camarotte G."/>
            <person name="Cannavan F."/>
            <person name="Cardozo J."/>
            <person name="Chambergo F."/>
            <person name="Ciapina L.P."/>
            <person name="Cicarelli R.M.B."/>
            <person name="Coutinho L.L."/>
            <person name="Cursino-Santos J.R."/>
            <person name="El-Dorry H."/>
            <person name="Faria J.B."/>
            <person name="Ferreira A.J.S."/>
            <person name="Ferreira R.C.C."/>
            <person name="Ferro M.I.T."/>
            <person name="Formighieri E.F."/>
            <person name="Franco M.C."/>
            <person name="Greggio C.C."/>
            <person name="Gruber A."/>
            <person name="Katsuyama A.M."/>
            <person name="Kishi L.T."/>
            <person name="Leite R.P."/>
            <person name="Lemos E.G.M."/>
            <person name="Lemos M.V.F."/>
            <person name="Locali E.C."/>
            <person name="Machado M.A."/>
            <person name="Madeira A.M.B.N."/>
            <person name="Martinez-Rossi N.M."/>
            <person name="Martins E.C."/>
            <person name="Meidanis J."/>
            <person name="Menck C.F.M."/>
            <person name="Miyaki C.Y."/>
            <person name="Moon D.H."/>
            <person name="Moreira L.M."/>
            <person name="Novo M.T.M."/>
            <person name="Okura V.K."/>
            <person name="Oliveira M.C."/>
            <person name="Oliveira V.R."/>
            <person name="Pereira H.A."/>
            <person name="Rossi A."/>
            <person name="Sena J.A.D."/>
            <person name="Silva C."/>
            <person name="de Souza R.F."/>
            <person name="Spinola L.A.F."/>
            <person name="Takita M.A."/>
            <person name="Tamura R.E."/>
            <person name="Teixeira E.C."/>
            <person name="Tezza R.I.D."/>
            <person name="Trindade dos Santos M."/>
            <person name="Truffi D."/>
            <person name="Tsai S.M."/>
            <person name="White F.F."/>
            <person name="Setubal J.C."/>
            <person name="Kitajima J.P."/>
        </authorList>
    </citation>
    <scope>NUCLEOTIDE SEQUENCE [LARGE SCALE GENOMIC DNA]</scope>
    <source>
        <strain>ATCC 33913 / DSM 3586 / NCPPB 528 / LMG 568 / P 25</strain>
    </source>
</reference>
<evidence type="ECO:0000255" key="1">
    <source>
        <dbReference type="HAMAP-Rule" id="MF_01368"/>
    </source>
</evidence>
<evidence type="ECO:0000305" key="2"/>
<proteinExistence type="inferred from homology"/>
<sequence length="127" mass="14333">MRHQKSGRKFNRTSAHREAMFRNMAASLFKHELIKTTLPKAKELRRVAEPLITIGKVDGVANRRLAFARLRDKEAVGKLFVELGPRYATRPGGYLRILKAGFRAGDNAPMAYVELVDRPVVAEEVSE</sequence>
<name>RL17_XANCP</name>
<protein>
    <recommendedName>
        <fullName evidence="1">Large ribosomal subunit protein bL17</fullName>
    </recommendedName>
    <alternativeName>
        <fullName evidence="2">50S ribosomal protein L17</fullName>
    </alternativeName>
</protein>
<gene>
    <name evidence="1" type="primary">rplQ</name>
    <name type="ordered locus">XCC0920</name>
</gene>
<feature type="chain" id="PRO_0000175549" description="Large ribosomal subunit protein bL17">
    <location>
        <begin position="1"/>
        <end position="127"/>
    </location>
</feature>
<feature type="sequence conflict" description="In Ref. 1; AAD00326." evidence="2" ref="1">
    <original>G</original>
    <variation>A</variation>
    <location>
        <position position="84"/>
    </location>
</feature>
<comment type="subunit">
    <text evidence="1">Part of the 50S ribosomal subunit. Contacts protein L32.</text>
</comment>
<comment type="similarity">
    <text evidence="1">Belongs to the bacterial ribosomal protein bL17 family.</text>
</comment>
<organism>
    <name type="scientific">Xanthomonas campestris pv. campestris (strain ATCC 33913 / DSM 3586 / NCPPB 528 / LMG 568 / P 25)</name>
    <dbReference type="NCBI Taxonomy" id="190485"/>
    <lineage>
        <taxon>Bacteria</taxon>
        <taxon>Pseudomonadati</taxon>
        <taxon>Pseudomonadota</taxon>
        <taxon>Gammaproteobacteria</taxon>
        <taxon>Lysobacterales</taxon>
        <taxon>Lysobacteraceae</taxon>
        <taxon>Xanthomonas</taxon>
    </lineage>
</organism>
<keyword id="KW-1185">Reference proteome</keyword>
<keyword id="KW-0687">Ribonucleoprotein</keyword>
<keyword id="KW-0689">Ribosomal protein</keyword>